<comment type="function">
    <text evidence="1">Binds to 23S rRNA.</text>
</comment>
<comment type="subunit">
    <text evidence="1">Part of the 50S ribosomal subunit.</text>
</comment>
<comment type="subcellular location">
    <subcellularLocation>
        <location>Plastid</location>
        <location>Chloroplast</location>
    </subcellularLocation>
</comment>
<comment type="similarity">
    <text evidence="2">Belongs to the universal ribosomal protein uL23 family.</text>
</comment>
<sequence length="93" mass="10825">MDGIRYAVFTDKSIRLLGKNQYTSNVESGSTRTEIKHWVELFFGVKVIAMNSHRLRGKARRMGPIMGQTMHYRRMIITLQPGYSIPPLRKKRT</sequence>
<feature type="chain" id="PRO_0000272903" description="Large ribosomal subunit protein uL23cz/uL23cy">
    <location>
        <begin position="1"/>
        <end position="93"/>
    </location>
</feature>
<keyword id="KW-0150">Chloroplast</keyword>
<keyword id="KW-0934">Plastid</keyword>
<keyword id="KW-0687">Ribonucleoprotein</keyword>
<keyword id="KW-0689">Ribosomal protein</keyword>
<keyword id="KW-0694">RNA-binding</keyword>
<keyword id="KW-0699">rRNA-binding</keyword>
<proteinExistence type="inferred from homology"/>
<evidence type="ECO:0000250" key="1"/>
<evidence type="ECO:0000305" key="2"/>
<name>RK23_HELAN</name>
<dbReference type="EMBL" id="DQ383815">
    <property type="protein sequence ID" value="ABD47188.1"/>
    <property type="molecule type" value="Genomic_DNA"/>
</dbReference>
<dbReference type="EMBL" id="DQ383815">
    <property type="protein sequence ID" value="ABD47210.1"/>
    <property type="molecule type" value="Genomic_DNA"/>
</dbReference>
<dbReference type="SMR" id="Q1KXP5"/>
<dbReference type="EnsemblPlants" id="mRNA:HanXRQr2_Chr11g0517891">
    <property type="protein sequence ID" value="CDS:HanXRQr2_Chr11g0517891.1"/>
    <property type="gene ID" value="HanXRQr2_Chr11g0517891"/>
</dbReference>
<dbReference type="EnsemblPlants" id="mRNA:HanXRQr2_Chr15g0710771">
    <property type="protein sequence ID" value="CDS:HanXRQr2_Chr15g0710771.1"/>
    <property type="gene ID" value="HanXRQr2_Chr15g0710771"/>
</dbReference>
<dbReference type="Gramene" id="mRNA:HanXRQr2_Chr11g0517891">
    <property type="protein sequence ID" value="CDS:HanXRQr2_Chr11g0517891.1"/>
    <property type="gene ID" value="HanXRQr2_Chr11g0517891"/>
</dbReference>
<dbReference type="Gramene" id="mRNA:HanXRQr2_Chr15g0710771">
    <property type="protein sequence ID" value="CDS:HanXRQr2_Chr15g0710771.1"/>
    <property type="gene ID" value="HanXRQr2_Chr15g0710771"/>
</dbReference>
<dbReference type="KEGG" id="han:4055604"/>
<dbReference type="KEGG" id="han:4055683"/>
<dbReference type="OrthoDB" id="1848840at2759"/>
<dbReference type="GO" id="GO:0009507">
    <property type="term" value="C:chloroplast"/>
    <property type="evidence" value="ECO:0007669"/>
    <property type="project" value="UniProtKB-SubCell"/>
</dbReference>
<dbReference type="GO" id="GO:1990904">
    <property type="term" value="C:ribonucleoprotein complex"/>
    <property type="evidence" value="ECO:0007669"/>
    <property type="project" value="UniProtKB-KW"/>
</dbReference>
<dbReference type="GO" id="GO:0005840">
    <property type="term" value="C:ribosome"/>
    <property type="evidence" value="ECO:0007669"/>
    <property type="project" value="UniProtKB-KW"/>
</dbReference>
<dbReference type="GO" id="GO:0003729">
    <property type="term" value="F:mRNA binding"/>
    <property type="evidence" value="ECO:0007669"/>
    <property type="project" value="UniProtKB-ARBA"/>
</dbReference>
<dbReference type="GO" id="GO:0019843">
    <property type="term" value="F:rRNA binding"/>
    <property type="evidence" value="ECO:0007669"/>
    <property type="project" value="UniProtKB-UniRule"/>
</dbReference>
<dbReference type="GO" id="GO:0003735">
    <property type="term" value="F:structural constituent of ribosome"/>
    <property type="evidence" value="ECO:0007669"/>
    <property type="project" value="InterPro"/>
</dbReference>
<dbReference type="GO" id="GO:0006412">
    <property type="term" value="P:translation"/>
    <property type="evidence" value="ECO:0007669"/>
    <property type="project" value="UniProtKB-UniRule"/>
</dbReference>
<dbReference type="FunFam" id="3.30.70.330:FF:000002">
    <property type="entry name" value="50S ribosomal protein L23, chloroplastic"/>
    <property type="match status" value="1"/>
</dbReference>
<dbReference type="Gene3D" id="3.30.70.330">
    <property type="match status" value="1"/>
</dbReference>
<dbReference type="HAMAP" id="MF_01369_B">
    <property type="entry name" value="Ribosomal_uL23_B"/>
    <property type="match status" value="1"/>
</dbReference>
<dbReference type="InterPro" id="IPR012677">
    <property type="entry name" value="Nucleotide-bd_a/b_plait_sf"/>
</dbReference>
<dbReference type="InterPro" id="IPR013025">
    <property type="entry name" value="Ribosomal_uL23-like"/>
</dbReference>
<dbReference type="InterPro" id="IPR012678">
    <property type="entry name" value="Ribosomal_uL23/eL15/eS24_sf"/>
</dbReference>
<dbReference type="InterPro" id="IPR001014">
    <property type="entry name" value="Ribosomal_uL23_CS"/>
</dbReference>
<dbReference type="PANTHER" id="PTHR11620">
    <property type="entry name" value="60S RIBOSOMAL PROTEIN L23A"/>
    <property type="match status" value="1"/>
</dbReference>
<dbReference type="Pfam" id="PF00276">
    <property type="entry name" value="Ribosomal_L23"/>
    <property type="match status" value="1"/>
</dbReference>
<dbReference type="SUPFAM" id="SSF54189">
    <property type="entry name" value="Ribosomal proteins S24e, L23 and L15e"/>
    <property type="match status" value="1"/>
</dbReference>
<dbReference type="PROSITE" id="PS00050">
    <property type="entry name" value="RIBOSOMAL_L23"/>
    <property type="match status" value="1"/>
</dbReference>
<organism>
    <name type="scientific">Helianthus annuus</name>
    <name type="common">Common sunflower</name>
    <dbReference type="NCBI Taxonomy" id="4232"/>
    <lineage>
        <taxon>Eukaryota</taxon>
        <taxon>Viridiplantae</taxon>
        <taxon>Streptophyta</taxon>
        <taxon>Embryophyta</taxon>
        <taxon>Tracheophyta</taxon>
        <taxon>Spermatophyta</taxon>
        <taxon>Magnoliopsida</taxon>
        <taxon>eudicotyledons</taxon>
        <taxon>Gunneridae</taxon>
        <taxon>Pentapetalae</taxon>
        <taxon>asterids</taxon>
        <taxon>campanulids</taxon>
        <taxon>Asterales</taxon>
        <taxon>Asteraceae</taxon>
        <taxon>Asteroideae</taxon>
        <taxon>Heliantheae alliance</taxon>
        <taxon>Heliantheae</taxon>
        <taxon>Helianthus</taxon>
    </lineage>
</organism>
<reference key="1">
    <citation type="submission" date="2006-01" db="EMBL/GenBank/DDBJ databases">
        <title>A comparison of the first two published chloroplast genomes in Asteraceae: Lactuca and Helianthus.</title>
        <authorList>
            <person name="Timme R.E."/>
            <person name="Kuehl J.V."/>
            <person name="Boore J.L."/>
            <person name="Jansen R.K."/>
        </authorList>
    </citation>
    <scope>NUCLEOTIDE SEQUENCE [LARGE SCALE GENOMIC DNA]</scope>
    <source>
        <strain>cv. HA383</strain>
    </source>
</reference>
<protein>
    <recommendedName>
        <fullName evidence="2">Large ribosomal subunit protein uL23cz/uL23cy</fullName>
    </recommendedName>
    <alternativeName>
        <fullName>50S ribosomal protein L23, chloroplastic</fullName>
    </alternativeName>
</protein>
<gene>
    <name type="primary">rpl23-A</name>
</gene>
<gene>
    <name type="primary">rpl23-B</name>
</gene>
<geneLocation type="chloroplast"/>
<accession>Q1KXP5</accession>